<feature type="chain" id="PRO_0000373660" description="Protein D345L">
    <location>
        <begin position="1"/>
        <end position="345"/>
    </location>
</feature>
<gene>
    <name type="ordered locus">Mal-117</name>
    <name type="ORF">13L</name>
    <name type="ORF">i4L</name>
</gene>
<reference key="1">
    <citation type="journal article" date="1994" name="J. Gen. Virol.">
        <title>Nucleotide sequence of a 55 kbp region from the right end of the genome of a pathogenic African swine fever virus isolate (Malawi LIL20/1).</title>
        <authorList>
            <person name="Dixon L.K."/>
            <person name="Twigg S.R.F."/>
            <person name="Baylis S.A."/>
            <person name="Vydelingum S."/>
            <person name="Bristow C."/>
            <person name="Hammond J.M."/>
            <person name="Smith G.L."/>
        </authorList>
    </citation>
    <scope>NUCLEOTIDE SEQUENCE [GENOMIC DNA]</scope>
</reference>
<reference key="2">
    <citation type="submission" date="2003-03" db="EMBL/GenBank/DDBJ databases">
        <title>African swine fever virus genomes.</title>
        <authorList>
            <person name="Kutish G.F."/>
            <person name="Rock D.L."/>
        </authorList>
    </citation>
    <scope>NUCLEOTIDE SEQUENCE [LARGE SCALE GENOMIC DNA]</scope>
</reference>
<keyword id="KW-1035">Host cytoplasm</keyword>
<keyword id="KW-0945">Host-virus interaction</keyword>
<keyword id="KW-1100">Inhibition of host NF-kappa-B by virus</keyword>
<accession>Q65225</accession>
<accession>Q65226</accession>
<dbReference type="EMBL" id="X71982">
    <property type="protein sequence ID" value="CAA50816.1"/>
    <property type="status" value="ALT_SEQ"/>
    <property type="molecule type" value="Genomic_DNA"/>
</dbReference>
<dbReference type="EMBL" id="X71982">
    <property type="protein sequence ID" value="CAA50817.1"/>
    <property type="status" value="ALT_SEQ"/>
    <property type="molecule type" value="Genomic_DNA"/>
</dbReference>
<dbReference type="EMBL" id="AY261361">
    <property type="status" value="NOT_ANNOTATED_CDS"/>
    <property type="molecule type" value="Genomic_DNA"/>
</dbReference>
<dbReference type="SMR" id="Q65225"/>
<dbReference type="Proteomes" id="UP000000860">
    <property type="component" value="Segment"/>
</dbReference>
<dbReference type="GO" id="GO:0030430">
    <property type="term" value="C:host cell cytoplasm"/>
    <property type="evidence" value="ECO:0007669"/>
    <property type="project" value="UniProtKB-SubCell"/>
</dbReference>
<dbReference type="GO" id="GO:0085034">
    <property type="term" value="P:symbiont-mediated suppression of host NF-kappaB cascade"/>
    <property type="evidence" value="ECO:0007669"/>
    <property type="project" value="UniProtKB-KW"/>
</dbReference>
<dbReference type="Gene3D" id="3.90.320.10">
    <property type="match status" value="1"/>
</dbReference>
<dbReference type="InterPro" id="IPR051703">
    <property type="entry name" value="NF-kappa-B_Signaling_Reg"/>
</dbReference>
<dbReference type="InterPro" id="IPR011604">
    <property type="entry name" value="PDDEXK-like_dom_sf"/>
</dbReference>
<dbReference type="InterPro" id="IPR011335">
    <property type="entry name" value="Restrct_endonuc-II-like"/>
</dbReference>
<dbReference type="InterPro" id="IPR019080">
    <property type="entry name" value="YqaJ_viral_recombinase"/>
</dbReference>
<dbReference type="PANTHER" id="PTHR46609">
    <property type="entry name" value="EXONUCLEASE, PHAGE-TYPE/RECB, C-TERMINAL DOMAIN-CONTAINING PROTEIN"/>
    <property type="match status" value="1"/>
</dbReference>
<dbReference type="PANTHER" id="PTHR46609:SF6">
    <property type="entry name" value="EXONUCLEASE, PHAGE-TYPE_RECB, C-TERMINAL DOMAIN-CONTAINING PROTEIN-RELATED"/>
    <property type="match status" value="1"/>
</dbReference>
<dbReference type="Pfam" id="PF09588">
    <property type="entry name" value="YqaJ"/>
    <property type="match status" value="1"/>
</dbReference>
<dbReference type="SUPFAM" id="SSF52980">
    <property type="entry name" value="Restriction endonuclease-like"/>
    <property type="match status" value="1"/>
</dbReference>
<sequence length="345" mass="39489">METFVRLFKDSPQQRSNAWHATRRTQVGGSDLASILGLNPYKSYYITLAEKANLFKKNLNHAACSWGTLFERVSKDLLELFCQTTVIGDNIHIDGTYLGYPGHSNSPDGFCHLTLGYTQQSWEIKTIFNDVCYETTKRIPVLVEIKSPFNRKIKNSVPSYYMPQIQSGLALSPPISMGIYVEAMFRVCSIHQLGWNHETNTDIHPPESMLPLAWGIITICSTQEHTEAPQDFGTLNAEAFHQLLETLYQKNQYTIHYSMPYETACPEMSNVVGYFGWKVFIFQIIPVMKHPQFLKDKYPIIQQFLHDLHTLKTSPSPMEAYEKICCSKESLLSTEDIDDFTNMLT</sequence>
<comment type="function">
    <text evidence="1">Plays a role in the negative regulation of host NF-kappa-B signaling pathway. Mechanistically, recruits IKKA/CHUK and IKBKB to suppress their kinase activity towards NFKBIA.</text>
</comment>
<comment type="subunit">
    <text evidence="1">Interacts with IKKA/CHUK and IKBKB.</text>
</comment>
<comment type="subcellular location">
    <subcellularLocation>
        <location evidence="1">Host cytoplasm</location>
    </subcellularLocation>
</comment>
<comment type="similarity">
    <text evidence="2">Belongs to the asfivirus D345L family.</text>
</comment>
<comment type="sequence caution" evidence="2">
    <conflict type="erroneous gene model prediction">
        <sequence resource="EMBL-CDS" id="CAA50816"/>
    </conflict>
</comment>
<comment type="sequence caution" evidence="2">
    <conflict type="erroneous gene model prediction">
        <sequence resource="EMBL-CDS" id="CAA50817"/>
    </conflict>
</comment>
<comment type="sequence caution" evidence="2">
    <conflict type="frameshift">
        <sequence resource="EMBL-CDS" id="CAA50817"/>
    </conflict>
</comment>
<evidence type="ECO:0000250" key="1">
    <source>
        <dbReference type="UniProtKB" id="Q65182"/>
    </source>
</evidence>
<evidence type="ECO:0000305" key="2"/>
<protein>
    <recommendedName>
        <fullName>Protein D345L</fullName>
        <shortName>pD345L</shortName>
    </recommendedName>
</protein>
<name>VF345_ASFM2</name>
<organismHost>
    <name type="scientific">Ornithodoros</name>
    <name type="common">relapsing fever ticks</name>
    <dbReference type="NCBI Taxonomy" id="6937"/>
</organismHost>
<organismHost>
    <name type="scientific">Phacochoerus aethiopicus</name>
    <name type="common">Warthog</name>
    <dbReference type="NCBI Taxonomy" id="85517"/>
</organismHost>
<organismHost>
    <name type="scientific">Phacochoerus africanus</name>
    <name type="common">Warthog</name>
    <dbReference type="NCBI Taxonomy" id="41426"/>
</organismHost>
<organismHost>
    <name type="scientific">Potamochoerus larvatus</name>
    <name type="common">Bushpig</name>
    <dbReference type="NCBI Taxonomy" id="273792"/>
</organismHost>
<organismHost>
    <name type="scientific">Sus scrofa</name>
    <name type="common">Pig</name>
    <dbReference type="NCBI Taxonomy" id="9823"/>
</organismHost>
<organism>
    <name type="scientific">African swine fever virus (isolate Tick/Malawi/Lil 20-1/1983)</name>
    <name type="common">ASFV</name>
    <dbReference type="NCBI Taxonomy" id="10500"/>
    <lineage>
        <taxon>Viruses</taxon>
        <taxon>Varidnaviria</taxon>
        <taxon>Bamfordvirae</taxon>
        <taxon>Nucleocytoviricota</taxon>
        <taxon>Pokkesviricetes</taxon>
        <taxon>Asfuvirales</taxon>
        <taxon>Asfarviridae</taxon>
        <taxon>Asfivirus</taxon>
        <taxon>African swine fever virus</taxon>
    </lineage>
</organism>
<proteinExistence type="inferred from homology"/>